<dbReference type="EC" id="3.5.1.44" evidence="1"/>
<dbReference type="EMBL" id="CP000264">
    <property type="protein sequence ID" value="ABD55762.1"/>
    <property type="status" value="ALT_INIT"/>
    <property type="molecule type" value="Genomic_DNA"/>
</dbReference>
<dbReference type="SMR" id="Q28NF0"/>
<dbReference type="STRING" id="290400.Jann_2845"/>
<dbReference type="KEGG" id="jan:Jann_2845"/>
<dbReference type="eggNOG" id="COG1871">
    <property type="taxonomic scope" value="Bacteria"/>
</dbReference>
<dbReference type="HOGENOM" id="CLU_087854_0_1_5"/>
<dbReference type="Proteomes" id="UP000008326">
    <property type="component" value="Chromosome"/>
</dbReference>
<dbReference type="GO" id="GO:0050568">
    <property type="term" value="F:protein-glutamine glutaminase activity"/>
    <property type="evidence" value="ECO:0007669"/>
    <property type="project" value="UniProtKB-UniRule"/>
</dbReference>
<dbReference type="GO" id="GO:0006935">
    <property type="term" value="P:chemotaxis"/>
    <property type="evidence" value="ECO:0007669"/>
    <property type="project" value="UniProtKB-UniRule"/>
</dbReference>
<dbReference type="CDD" id="cd16352">
    <property type="entry name" value="CheD"/>
    <property type="match status" value="1"/>
</dbReference>
<dbReference type="Gene3D" id="3.30.1330.200">
    <property type="match status" value="1"/>
</dbReference>
<dbReference type="HAMAP" id="MF_01440">
    <property type="entry name" value="CheD"/>
    <property type="match status" value="1"/>
</dbReference>
<dbReference type="InterPro" id="IPR038592">
    <property type="entry name" value="CheD-like_sf"/>
</dbReference>
<dbReference type="InterPro" id="IPR005659">
    <property type="entry name" value="Chemorcpt_Glu_NH3ase_CheD"/>
</dbReference>
<dbReference type="InterPro" id="IPR011324">
    <property type="entry name" value="Cytotoxic_necrot_fac-like_cat"/>
</dbReference>
<dbReference type="PANTHER" id="PTHR35147:SF3">
    <property type="entry name" value="CHEMORECEPTOR GLUTAMINE DEAMIDASE CHED 1-RELATED"/>
    <property type="match status" value="1"/>
</dbReference>
<dbReference type="PANTHER" id="PTHR35147">
    <property type="entry name" value="CHEMORECEPTOR GLUTAMINE DEAMIDASE CHED-RELATED"/>
    <property type="match status" value="1"/>
</dbReference>
<dbReference type="Pfam" id="PF03975">
    <property type="entry name" value="CheD"/>
    <property type="match status" value="1"/>
</dbReference>
<dbReference type="SUPFAM" id="SSF64438">
    <property type="entry name" value="CNF1/YfiH-like putative cysteine hydrolases"/>
    <property type="match status" value="1"/>
</dbReference>
<name>CHED_JANSC</name>
<reference key="1">
    <citation type="submission" date="2006-02" db="EMBL/GenBank/DDBJ databases">
        <title>Complete sequence of chromosome of Jannaschia sp. CCS1.</title>
        <authorList>
            <consortium name="US DOE Joint Genome Institute"/>
            <person name="Copeland A."/>
            <person name="Lucas S."/>
            <person name="Lapidus A."/>
            <person name="Barry K."/>
            <person name="Detter J.C."/>
            <person name="Glavina del Rio T."/>
            <person name="Hammon N."/>
            <person name="Israni S."/>
            <person name="Pitluck S."/>
            <person name="Brettin T."/>
            <person name="Bruce D."/>
            <person name="Han C."/>
            <person name="Tapia R."/>
            <person name="Gilna P."/>
            <person name="Chertkov O."/>
            <person name="Saunders E."/>
            <person name="Schmutz J."/>
            <person name="Larimer F."/>
            <person name="Land M."/>
            <person name="Kyrpides N."/>
            <person name="Lykidis A."/>
            <person name="Moran M.A."/>
            <person name="Belas R."/>
            <person name="Ye W."/>
            <person name="Buchan A."/>
            <person name="Gonzalez J.M."/>
            <person name="Schell M.A."/>
            <person name="Richardson P."/>
        </authorList>
    </citation>
    <scope>NUCLEOTIDE SEQUENCE [LARGE SCALE GENOMIC DNA]</scope>
    <source>
        <strain>CCS1</strain>
    </source>
</reference>
<gene>
    <name evidence="1" type="primary">cheD</name>
    <name type="ordered locus">Jann_2845</name>
</gene>
<accession>Q28NF0</accession>
<feature type="chain" id="PRO_0000251039" description="Probable chemoreceptor glutamine deamidase CheD">
    <location>
        <begin position="1"/>
        <end position="175"/>
    </location>
</feature>
<protein>
    <recommendedName>
        <fullName evidence="1">Probable chemoreceptor glutamine deamidase CheD</fullName>
        <ecNumber evidence="1">3.5.1.44</ecNumber>
    </recommendedName>
</protein>
<keyword id="KW-0145">Chemotaxis</keyword>
<keyword id="KW-0378">Hydrolase</keyword>
<keyword id="KW-1185">Reference proteome</keyword>
<evidence type="ECO:0000255" key="1">
    <source>
        <dbReference type="HAMAP-Rule" id="MF_01440"/>
    </source>
</evidence>
<evidence type="ECO:0000305" key="2"/>
<comment type="function">
    <text evidence="1">Probably deamidates glutamine residues to glutamate on methyl-accepting chemotaxis receptors (MCPs), playing an important role in chemotaxis.</text>
</comment>
<comment type="catalytic activity">
    <reaction evidence="1">
        <text>L-glutaminyl-[protein] + H2O = L-glutamyl-[protein] + NH4(+)</text>
        <dbReference type="Rhea" id="RHEA:16441"/>
        <dbReference type="Rhea" id="RHEA-COMP:10207"/>
        <dbReference type="Rhea" id="RHEA-COMP:10208"/>
        <dbReference type="ChEBI" id="CHEBI:15377"/>
        <dbReference type="ChEBI" id="CHEBI:28938"/>
        <dbReference type="ChEBI" id="CHEBI:29973"/>
        <dbReference type="ChEBI" id="CHEBI:30011"/>
        <dbReference type="EC" id="3.5.1.44"/>
    </reaction>
</comment>
<comment type="similarity">
    <text evidence="1">Belongs to the CheD family.</text>
</comment>
<comment type="sequence caution" evidence="2">
    <conflict type="erroneous initiation">
        <sequence resource="EMBL-CDS" id="ABD55762"/>
    </conflict>
</comment>
<organism>
    <name type="scientific">Jannaschia sp. (strain CCS1)</name>
    <dbReference type="NCBI Taxonomy" id="290400"/>
    <lineage>
        <taxon>Bacteria</taxon>
        <taxon>Pseudomonadati</taxon>
        <taxon>Pseudomonadota</taxon>
        <taxon>Alphaproteobacteria</taxon>
        <taxon>Rhodobacterales</taxon>
        <taxon>Roseobacteraceae</taxon>
        <taxon>Jannaschia</taxon>
    </lineage>
</organism>
<proteinExistence type="inferred from homology"/>
<sequence>MTHLRSRSGNVTHVMQGQLYISQTPGESLTCILGSCVAACVHDPALRIGGMNHFLLPGRDPHDTGSVRYGARSMEALIDALLHKGADRQRLNVWLFGGANVLGTQTGIGAANSAFAVDFTRAQGLTLRGSDLGGTRGRRVHFTPATGDPRVDYMQSDGIDDPIAGPLGAPGVELF</sequence>